<name>H32_TETMA</name>
<protein>
    <recommendedName>
        <fullName>Histone H3.2</fullName>
    </recommendedName>
</protein>
<accession>P69118</accession>
<accession>P17705</accession>
<dbReference type="EMBL" id="X17135">
    <property type="protein sequence ID" value="CAA35004.1"/>
    <property type="molecule type" value="Genomic_DNA"/>
</dbReference>
<dbReference type="PIR" id="S10279">
    <property type="entry name" value="S10279"/>
</dbReference>
<dbReference type="GO" id="GO:0000786">
    <property type="term" value="C:nucleosome"/>
    <property type="evidence" value="ECO:0007669"/>
    <property type="project" value="UniProtKB-KW"/>
</dbReference>
<dbReference type="GO" id="GO:0005634">
    <property type="term" value="C:nucleus"/>
    <property type="evidence" value="ECO:0007669"/>
    <property type="project" value="UniProtKB-SubCell"/>
</dbReference>
<dbReference type="GO" id="GO:0003677">
    <property type="term" value="F:DNA binding"/>
    <property type="evidence" value="ECO:0007669"/>
    <property type="project" value="UniProtKB-KW"/>
</dbReference>
<dbReference type="GO" id="GO:0046982">
    <property type="term" value="F:protein heterodimerization activity"/>
    <property type="evidence" value="ECO:0007669"/>
    <property type="project" value="InterPro"/>
</dbReference>
<dbReference type="GO" id="GO:0030527">
    <property type="term" value="F:structural constituent of chromatin"/>
    <property type="evidence" value="ECO:0007669"/>
    <property type="project" value="InterPro"/>
</dbReference>
<dbReference type="Gene3D" id="1.10.20.10">
    <property type="entry name" value="Histone, subunit A"/>
    <property type="match status" value="1"/>
</dbReference>
<dbReference type="InterPro" id="IPR009072">
    <property type="entry name" value="Histone-fold"/>
</dbReference>
<dbReference type="InterPro" id="IPR000164">
    <property type="entry name" value="Histone_H3/CENP-A"/>
</dbReference>
<dbReference type="PANTHER" id="PTHR11426">
    <property type="entry name" value="HISTONE H3"/>
    <property type="match status" value="1"/>
</dbReference>
<dbReference type="PRINTS" id="PR00622">
    <property type="entry name" value="HISTONEH3"/>
</dbReference>
<dbReference type="SUPFAM" id="SSF47113">
    <property type="entry name" value="Histone-fold"/>
    <property type="match status" value="1"/>
</dbReference>
<dbReference type="PROSITE" id="PS00322">
    <property type="entry name" value="HISTONE_H3_1"/>
    <property type="match status" value="1"/>
</dbReference>
<organism>
    <name type="scientific">Tetrahymena malaccensis</name>
    <dbReference type="NCBI Taxonomy" id="5901"/>
    <lineage>
        <taxon>Eukaryota</taxon>
        <taxon>Sar</taxon>
        <taxon>Alveolata</taxon>
        <taxon>Ciliophora</taxon>
        <taxon>Intramacronucleata</taxon>
        <taxon>Oligohymenophorea</taxon>
        <taxon>Hymenostomatida</taxon>
        <taxon>Tetrahymenina</taxon>
        <taxon>Tetrahymenidae</taxon>
        <taxon>Tetrahymena</taxon>
    </lineage>
</organism>
<reference key="1">
    <citation type="journal article" date="1990" name="Nucleic Acids Res.">
        <title>Characterization of the promoter region of Tetrahymena genes.</title>
        <authorList>
            <person name="Brunk C.F."/>
            <person name="Sadler L.A."/>
        </authorList>
    </citation>
    <scope>NUCLEOTIDE SEQUENCE [GENOMIC DNA]</scope>
</reference>
<reference key="2">
    <citation type="journal article" date="1990" name="J. Mol. Evol.">
        <title>Phylogenetic relationships among Tetrahymena species determined using the polymerase chain reaction.</title>
        <authorList>
            <person name="Brunk C.F."/>
            <person name="Kahn R.W."/>
            <person name="Sadler L.A."/>
        </authorList>
    </citation>
    <scope>NUCLEOTIDE SEQUENCE [GENOMIC DNA]</scope>
</reference>
<evidence type="ECO:0000250" key="1"/>
<evidence type="ECO:0000256" key="2">
    <source>
        <dbReference type="SAM" id="MobiDB-lite"/>
    </source>
</evidence>
<evidence type="ECO:0000305" key="3"/>
<keyword id="KW-0158">Chromosome</keyword>
<keyword id="KW-0238">DNA-binding</keyword>
<keyword id="KW-0544">Nucleosome core</keyword>
<keyword id="KW-0539">Nucleus</keyword>
<comment type="function">
    <text>Core component of nucleosome. Nucleosomes wrap and compact DNA into chromatin, limiting DNA accessibility to the cellular machineries which require DNA as a template. Histones thereby play a central role in transcription regulation, DNA repair, DNA replication and chromosomal stability. DNA accessibility is regulated via a complex set of post-translational modifications of histones, also called histone code, and nucleosome remodeling.</text>
</comment>
<comment type="subunit">
    <text>The nucleosome is a histone octamer containing two molecules each of H2A, H2B, H3 and H4 assembled in one H3-H4 heterotetramer and two H2A-H2B heterodimers. The octamer wraps approximately 147 bp of DNA.</text>
</comment>
<comment type="subcellular location">
    <subcellularLocation>
        <location evidence="1">Nucleus</location>
    </subcellularLocation>
    <subcellularLocation>
        <location evidence="1">Chromosome</location>
    </subcellularLocation>
</comment>
<comment type="similarity">
    <text evidence="3">Belongs to the histone H3 family.</text>
</comment>
<sequence>MARTKQTARKSTGAKAPRKQLASKAARKSAPATGGIKKPHR</sequence>
<feature type="initiator methionine" description="Removed" evidence="1">
    <location>
        <position position="1"/>
    </location>
</feature>
<feature type="chain" id="PRO_0000221340" description="Histone H3.2">
    <location>
        <begin position="2"/>
        <end position="41" status="greater than"/>
    </location>
</feature>
<feature type="region of interest" description="Disordered" evidence="2">
    <location>
        <begin position="1"/>
        <end position="41"/>
    </location>
</feature>
<feature type="non-terminal residue">
    <location>
        <position position="41"/>
    </location>
</feature>
<proteinExistence type="inferred from homology"/>